<reference key="1">
    <citation type="journal article" date="2005" name="BMC Genomics">
        <title>Characterization of 954 bovine full-CDS cDNA sequences.</title>
        <authorList>
            <person name="Harhay G.P."/>
            <person name="Sonstegard T.S."/>
            <person name="Keele J.W."/>
            <person name="Heaton M.P."/>
            <person name="Clawson M.L."/>
            <person name="Snelling W.M."/>
            <person name="Wiedmann R.T."/>
            <person name="Van Tassell C.P."/>
            <person name="Smith T.P.L."/>
        </authorList>
    </citation>
    <scope>NUCLEOTIDE SEQUENCE [LARGE SCALE MRNA]</scope>
</reference>
<reference key="2">
    <citation type="submission" date="2006-02" db="EMBL/GenBank/DDBJ databases">
        <authorList>
            <consortium name="NIH - Mammalian Gene Collection (MGC) project"/>
        </authorList>
    </citation>
    <scope>NUCLEOTIDE SEQUENCE [LARGE SCALE MRNA]</scope>
    <source>
        <strain>Hereford</strain>
        <tissue>Uterus</tissue>
    </source>
</reference>
<comment type="function">
    <text evidence="3">Plays a crucial role in the maintenance of the structure of mitochondrial cristae and the proper assembly of the mitochondrial respiratory chain complexes. Required for the assembly of TOMM40 into the TOM complex.</text>
</comment>
<comment type="subunit">
    <text evidence="3">Associates with the mitochondrial contact site and cristae organizing system (MICOS) complex, composed of at least MICOS10/MIC10, CHCHD3/MIC19, CHCHD6/MIC25, APOOL/MIC27, IMMT/MIC60, APOO/MIC23/MIC26 and QIL1/MIC13 (By similarity). This complex was also known under the names MINOS or MitOS complex (By similarity). The MICOS complex associates with mitochondrial outer membrane proteins SAMM50, MTX1 and MTX2 (together described as components of the mitochondrial outer membrane sorting assembly machinery (SAM) complex) and DNAJC11, mitochondrial inner membrane protein TMEM11 and with HSPA9 (By similarity). The MICOS and SAM complexes together with DNAJC11 are part of a large protein complex spanning both membranes termed the mitochondrial intermembrane space bridging (MIB) complex (By similarity). Interacts with IMMT/MIC60. Interacts with CHCHD3/MIC19 (By similarity). Interacts with ARMC1 (By similarity).</text>
</comment>
<comment type="subcellular location">
    <subcellularLocation>
        <location evidence="3">Mitochondrion outer membrane</location>
        <topology evidence="1">Multi-pass membrane protein</topology>
    </subcellularLocation>
    <subcellularLocation>
        <location evidence="2">Cytoplasm</location>
    </subcellularLocation>
    <subcellularLocation>
        <location evidence="3">Mitochondrion</location>
    </subcellularLocation>
</comment>
<comment type="domain">
    <text evidence="1">Its C-terminal part seems to contain many membrane-spanning sided beta-sheets, that have the potential to adopt a transmembrane beta-barrel type structure.</text>
</comment>
<comment type="similarity">
    <text evidence="5">Belongs to the SAM50/omp85 family.</text>
</comment>
<gene>
    <name type="primary">SAMM50</name>
</gene>
<keyword id="KW-0963">Cytoplasm</keyword>
<keyword id="KW-0472">Membrane</keyword>
<keyword id="KW-0488">Methylation</keyword>
<keyword id="KW-0496">Mitochondrion</keyword>
<keyword id="KW-1000">Mitochondrion outer membrane</keyword>
<keyword id="KW-1185">Reference proteome</keyword>
<keyword id="KW-0812">Transmembrane</keyword>
<keyword id="KW-1134">Transmembrane beta strand</keyword>
<feature type="chain" id="PRO_0000383680" description="Sorting and assembly machinery component 50 homolog">
    <location>
        <begin position="1"/>
        <end position="469"/>
    </location>
</feature>
<feature type="domain" description="POTRA" evidence="4">
    <location>
        <begin position="45"/>
        <end position="125"/>
    </location>
</feature>
<feature type="modified residue" description="N6-methyllysine" evidence="3">
    <location>
        <position position="255"/>
    </location>
</feature>
<name>SAM50_BOVIN</name>
<organism>
    <name type="scientific">Bos taurus</name>
    <name type="common">Bovine</name>
    <dbReference type="NCBI Taxonomy" id="9913"/>
    <lineage>
        <taxon>Eukaryota</taxon>
        <taxon>Metazoa</taxon>
        <taxon>Chordata</taxon>
        <taxon>Craniata</taxon>
        <taxon>Vertebrata</taxon>
        <taxon>Euteleostomi</taxon>
        <taxon>Mammalia</taxon>
        <taxon>Eutheria</taxon>
        <taxon>Laurasiatheria</taxon>
        <taxon>Artiodactyla</taxon>
        <taxon>Ruminantia</taxon>
        <taxon>Pecora</taxon>
        <taxon>Bovidae</taxon>
        <taxon>Bovinae</taxon>
        <taxon>Bos</taxon>
    </lineage>
</organism>
<evidence type="ECO:0000250" key="1"/>
<evidence type="ECO:0000250" key="2">
    <source>
        <dbReference type="UniProtKB" id="Q6AXV4"/>
    </source>
</evidence>
<evidence type="ECO:0000250" key="3">
    <source>
        <dbReference type="UniProtKB" id="Q9Y512"/>
    </source>
</evidence>
<evidence type="ECO:0000255" key="4">
    <source>
        <dbReference type="PROSITE-ProRule" id="PRU01115"/>
    </source>
</evidence>
<evidence type="ECO:0000305" key="5"/>
<protein>
    <recommendedName>
        <fullName>Sorting and assembly machinery component 50 homolog</fullName>
    </recommendedName>
</protein>
<accession>Q2HJ55</accession>
<proteinExistence type="evidence at transcript level"/>
<dbReference type="EMBL" id="BT025460">
    <property type="protein sequence ID" value="ABF57416.1"/>
    <property type="molecule type" value="mRNA"/>
</dbReference>
<dbReference type="EMBL" id="BC113305">
    <property type="protein sequence ID" value="AAI13306.1"/>
    <property type="molecule type" value="mRNA"/>
</dbReference>
<dbReference type="RefSeq" id="NP_001040088.1">
    <property type="nucleotide sequence ID" value="NM_001046623.1"/>
</dbReference>
<dbReference type="SMR" id="Q2HJ55"/>
<dbReference type="FunCoup" id="Q2HJ55">
    <property type="interactions" value="3710"/>
</dbReference>
<dbReference type="STRING" id="9913.ENSBTAP00000073084"/>
<dbReference type="PaxDb" id="9913-ENSBTAP00000055147"/>
<dbReference type="DNASU" id="618777"/>
<dbReference type="Ensembl" id="ENSBTAT00000063243.2">
    <property type="protein sequence ID" value="ENSBTAP00000055147.2"/>
    <property type="gene ID" value="ENSBTAG00000045957.3"/>
</dbReference>
<dbReference type="GeneID" id="618777"/>
<dbReference type="KEGG" id="bta:618777"/>
<dbReference type="CTD" id="25813"/>
<dbReference type="VEuPathDB" id="HostDB:ENSBTAG00000045957"/>
<dbReference type="VGNC" id="VGNC:34278">
    <property type="gene designation" value="SAMM50"/>
</dbReference>
<dbReference type="eggNOG" id="KOG2602">
    <property type="taxonomic scope" value="Eukaryota"/>
</dbReference>
<dbReference type="GeneTree" id="ENSGT00390000011355"/>
<dbReference type="InParanoid" id="Q2HJ55"/>
<dbReference type="OMA" id="IYLDTNH"/>
<dbReference type="OrthoDB" id="1724197at2759"/>
<dbReference type="Reactome" id="R-BTA-9013404">
    <property type="pathway name" value="RAC2 GTPase cycle"/>
</dbReference>
<dbReference type="Proteomes" id="UP000009136">
    <property type="component" value="Chromosome 5"/>
</dbReference>
<dbReference type="Bgee" id="ENSBTAG00000045957">
    <property type="expression patterns" value="Expressed in digestive system secreted substance and 105 other cell types or tissues"/>
</dbReference>
<dbReference type="GO" id="GO:0005741">
    <property type="term" value="C:mitochondrial outer membrane"/>
    <property type="evidence" value="ECO:0007669"/>
    <property type="project" value="UniProtKB-SubCell"/>
</dbReference>
<dbReference type="GO" id="GO:0042407">
    <property type="term" value="P:cristae formation"/>
    <property type="evidence" value="ECO:0000250"/>
    <property type="project" value="UniProtKB"/>
</dbReference>
<dbReference type="GO" id="GO:0033108">
    <property type="term" value="P:mitochondrial respiratory chain complex assembly"/>
    <property type="evidence" value="ECO:0000318"/>
    <property type="project" value="GO_Central"/>
</dbReference>
<dbReference type="GO" id="GO:0045040">
    <property type="term" value="P:protein insertion into mitochondrial outer membrane"/>
    <property type="evidence" value="ECO:0000318"/>
    <property type="project" value="GO_Central"/>
</dbReference>
<dbReference type="FunFam" id="2.40.160.50:FF:000002">
    <property type="entry name" value="sorting and assembly machinery component 50 homolog"/>
    <property type="match status" value="1"/>
</dbReference>
<dbReference type="FunFam" id="3.10.20.310:FF:000010">
    <property type="entry name" value="sorting and assembly machinery component 50 homolog"/>
    <property type="match status" value="1"/>
</dbReference>
<dbReference type="Gene3D" id="3.10.20.310">
    <property type="entry name" value="membrane protein fhac"/>
    <property type="match status" value="1"/>
</dbReference>
<dbReference type="Gene3D" id="2.40.160.50">
    <property type="entry name" value="membrane protein fhac: a member of the omp85/tpsb transporter family"/>
    <property type="match status" value="1"/>
</dbReference>
<dbReference type="InterPro" id="IPR000184">
    <property type="entry name" value="Bac_surfAg_D15"/>
</dbReference>
<dbReference type="InterPro" id="IPR039910">
    <property type="entry name" value="D15-like"/>
</dbReference>
<dbReference type="InterPro" id="IPR034746">
    <property type="entry name" value="POTRA"/>
</dbReference>
<dbReference type="PANTHER" id="PTHR12815:SF18">
    <property type="entry name" value="SORTING AND ASSEMBLY MACHINERY COMPONENT 50 HOMOLOG"/>
    <property type="match status" value="1"/>
</dbReference>
<dbReference type="PANTHER" id="PTHR12815">
    <property type="entry name" value="SORTING AND ASSEMBLY MACHINERY SAMM50 PROTEIN FAMILY MEMBER"/>
    <property type="match status" value="1"/>
</dbReference>
<dbReference type="Pfam" id="PF01103">
    <property type="entry name" value="Omp85"/>
    <property type="match status" value="1"/>
</dbReference>
<dbReference type="PROSITE" id="PS51779">
    <property type="entry name" value="POTRA"/>
    <property type="match status" value="1"/>
</dbReference>
<sequence length="469" mass="52042">MGTVHARSLEPLPASGPDFGALGEEAEFVEVEPEAKQEILENKDVVVQHVHFDGLGRTKDDIIMYEIRDVFKAKNLIEVMRKSHEAREKLLRLGIFRQVDVLIDTCQGDDALPNGLDVTFEVTELRRLTGSYNTMVGNNEGSMVLGLKLPNLLGRAEKVTFQFSYGTKETSYGLSFFKPQPGNFDRNFSVNLYKVTGQFPWSSLRETDRGVSAEYSFPTWKTSHTVKWEGVWRELGCLSRVASFAVRKESGHSLKSSLSHSMVIDSRNSSILPKRGALLKVNQELAGYTGGDVSFLKEDFELQLNKQLILDTVFSASLWGGMLVPMGDKPSSIADRFYLGGPTSVRGFSMHSVGPQSEGDYLGGEAYWAGGLHLYTPLPFRPGQGGFGELFRTHFFLNAGNLCNLNYGEGPKAHIRKLAECIRWSYGAGIVLRLGNIARLELNYCVPMGVQRGDRICDGVQFGAGIRFL</sequence>